<sequence length="474" mass="51109">MQYQLLINGVLVDGEGERQSVYNPATGEVILEIAEASPAQVDAAVLAADSAFAEWGQTTPKARAECLLKLADSIEQNALEFARLESQNCGKPLHCVINDEIPAIVDVFRFFAGAARCLSGLAAGEYLEGHTSMIRRDPIGVVASIAPWNYPLMMAAWKLAPALAAGNCVVIKPSEITPLTALKLAALAKDIFPPGVLNVLFGRGQTVGDVLTGHEKVRMVSLTGSISTGEHILRHTAPAIKRTHMELGGKAPVIVFDDADLDAAAQGVRTFGFYNAGQDCTAACRIYAQRGIYDALVEKLGNAVSSLKMGAPEDESTELGPLSSLAHLKRVTAAVEEAKALSHIRVITGGSQTEGKGYYFAPTLLADAKQEDAIVQREVFGPVVSITVFDDEDQVLRWANDSRYGLASSVWTQDVGRAHRLSARLQYGCTWINTHFMLVSEMPHGGQKQSGYGKDMSLYGLEDYTLVRHIMVKH</sequence>
<reference key="1">
    <citation type="journal article" date="2009" name="PLoS ONE">
        <title>Salmonella paratyphi C: genetic divergence from Salmonella choleraesuis and pathogenic convergence with Salmonella typhi.</title>
        <authorList>
            <person name="Liu W.-Q."/>
            <person name="Feng Y."/>
            <person name="Wang Y."/>
            <person name="Zou Q.-H."/>
            <person name="Chen F."/>
            <person name="Guo J.-T."/>
            <person name="Peng Y.-H."/>
            <person name="Jin Y."/>
            <person name="Li Y.-G."/>
            <person name="Hu S.-N."/>
            <person name="Johnston R.N."/>
            <person name="Liu G.-R."/>
            <person name="Liu S.-L."/>
        </authorList>
    </citation>
    <scope>NUCLEOTIDE SEQUENCE [LARGE SCALE GENOMIC DNA]</scope>
    <source>
        <strain>RKS4594</strain>
    </source>
</reference>
<accession>C0Q4N4</accession>
<protein>
    <recommendedName>
        <fullName evidence="1">Gamma-aminobutyraldehyde dehydrogenase</fullName>
        <shortName evidence="1">ABALDH</shortName>
        <ecNumber evidence="1">1.2.1.19</ecNumber>
    </recommendedName>
    <alternativeName>
        <fullName evidence="1">1-pyrroline dehydrogenase</fullName>
    </alternativeName>
    <alternativeName>
        <fullName evidence="1">4-aminobutanal dehydrogenase</fullName>
    </alternativeName>
    <alternativeName>
        <fullName evidence="1">5-aminopentanal dehydrogenase</fullName>
        <ecNumber evidence="1">1.2.1.-</ecNumber>
    </alternativeName>
</protein>
<evidence type="ECO:0000255" key="1">
    <source>
        <dbReference type="HAMAP-Rule" id="MF_01275"/>
    </source>
</evidence>
<feature type="chain" id="PRO_1000165212" description="Gamma-aminobutyraldehyde dehydrogenase">
    <location>
        <begin position="1"/>
        <end position="474"/>
    </location>
</feature>
<feature type="active site" evidence="1">
    <location>
        <position position="246"/>
    </location>
</feature>
<feature type="active site" description="Nucleophile" evidence="1">
    <location>
        <position position="280"/>
    </location>
</feature>
<feature type="binding site" evidence="1">
    <location>
        <begin position="146"/>
        <end position="148"/>
    </location>
    <ligand>
        <name>NAD(+)</name>
        <dbReference type="ChEBI" id="CHEBI:57540"/>
    </ligand>
</feature>
<feature type="binding site" evidence="1">
    <location>
        <begin position="172"/>
        <end position="175"/>
    </location>
    <ligand>
        <name>NAD(+)</name>
        <dbReference type="ChEBI" id="CHEBI:57540"/>
    </ligand>
</feature>
<feature type="binding site" evidence="1">
    <location>
        <position position="209"/>
    </location>
    <ligand>
        <name>NAD(+)</name>
        <dbReference type="ChEBI" id="CHEBI:57540"/>
    </ligand>
</feature>
<feature type="binding site" evidence="1">
    <location>
        <begin position="225"/>
        <end position="228"/>
    </location>
    <ligand>
        <name>NAD(+)</name>
        <dbReference type="ChEBI" id="CHEBI:57540"/>
    </ligand>
</feature>
<feature type="binding site" evidence="1">
    <location>
        <position position="280"/>
    </location>
    <ligand>
        <name>NAD(+)</name>
        <dbReference type="ChEBI" id="CHEBI:57540"/>
    </ligand>
</feature>
<dbReference type="EC" id="1.2.1.19" evidence="1"/>
<dbReference type="EC" id="1.2.1.-" evidence="1"/>
<dbReference type="EMBL" id="CP000857">
    <property type="protein sequence ID" value="ACN46267.1"/>
    <property type="molecule type" value="Genomic_DNA"/>
</dbReference>
<dbReference type="SMR" id="C0Q4N4"/>
<dbReference type="KEGG" id="sei:SPC_2138"/>
<dbReference type="HOGENOM" id="CLU_005391_0_2_6"/>
<dbReference type="UniPathway" id="UPA00188">
    <property type="reaction ID" value="UER00292"/>
</dbReference>
<dbReference type="Proteomes" id="UP000001599">
    <property type="component" value="Chromosome"/>
</dbReference>
<dbReference type="GO" id="GO:0019145">
    <property type="term" value="F:aminobutyraldehyde dehydrogenase (NAD+) activity"/>
    <property type="evidence" value="ECO:0007669"/>
    <property type="project" value="UniProtKB-UniRule"/>
</dbReference>
<dbReference type="GO" id="GO:0051287">
    <property type="term" value="F:NAD binding"/>
    <property type="evidence" value="ECO:0007669"/>
    <property type="project" value="UniProtKB-UniRule"/>
</dbReference>
<dbReference type="GO" id="GO:0019477">
    <property type="term" value="P:L-lysine catabolic process"/>
    <property type="evidence" value="ECO:0007669"/>
    <property type="project" value="UniProtKB-UniRule"/>
</dbReference>
<dbReference type="GO" id="GO:0009447">
    <property type="term" value="P:putrescine catabolic process"/>
    <property type="evidence" value="ECO:0007669"/>
    <property type="project" value="UniProtKB-UniRule"/>
</dbReference>
<dbReference type="CDD" id="cd07092">
    <property type="entry name" value="ALDH_ABALDH-YdcW"/>
    <property type="match status" value="1"/>
</dbReference>
<dbReference type="FunFam" id="3.40.605.10:FF:000001">
    <property type="entry name" value="Aldehyde dehydrogenase 1"/>
    <property type="match status" value="1"/>
</dbReference>
<dbReference type="FunFam" id="3.40.309.10:FF:000010">
    <property type="entry name" value="Gamma-aminobutyraldehyde dehydrogenase"/>
    <property type="match status" value="1"/>
</dbReference>
<dbReference type="Gene3D" id="3.40.605.10">
    <property type="entry name" value="Aldehyde Dehydrogenase, Chain A, domain 1"/>
    <property type="match status" value="1"/>
</dbReference>
<dbReference type="Gene3D" id="3.40.309.10">
    <property type="entry name" value="Aldehyde Dehydrogenase, Chain A, domain 2"/>
    <property type="match status" value="1"/>
</dbReference>
<dbReference type="HAMAP" id="MF_01275">
    <property type="entry name" value="Aldedh_Prr"/>
    <property type="match status" value="1"/>
</dbReference>
<dbReference type="InterPro" id="IPR016161">
    <property type="entry name" value="Ald_DH/histidinol_DH"/>
</dbReference>
<dbReference type="InterPro" id="IPR016163">
    <property type="entry name" value="Ald_DH_C"/>
</dbReference>
<dbReference type="InterPro" id="IPR029510">
    <property type="entry name" value="Ald_DH_CS_GLU"/>
</dbReference>
<dbReference type="InterPro" id="IPR016162">
    <property type="entry name" value="Ald_DH_N"/>
</dbReference>
<dbReference type="InterPro" id="IPR015590">
    <property type="entry name" value="Aldehyde_DH_dom"/>
</dbReference>
<dbReference type="InterPro" id="IPR015657">
    <property type="entry name" value="Aminobutyraldehyde_DH"/>
</dbReference>
<dbReference type="InterPro" id="IPR017749">
    <property type="entry name" value="PatD"/>
</dbReference>
<dbReference type="NCBIfam" id="TIGR03374">
    <property type="entry name" value="ABALDH"/>
    <property type="match status" value="1"/>
</dbReference>
<dbReference type="NCBIfam" id="NF010000">
    <property type="entry name" value="PRK13473.1"/>
    <property type="match status" value="1"/>
</dbReference>
<dbReference type="PANTHER" id="PTHR11699">
    <property type="entry name" value="ALDEHYDE DEHYDROGENASE-RELATED"/>
    <property type="match status" value="1"/>
</dbReference>
<dbReference type="Pfam" id="PF00171">
    <property type="entry name" value="Aldedh"/>
    <property type="match status" value="1"/>
</dbReference>
<dbReference type="SUPFAM" id="SSF53720">
    <property type="entry name" value="ALDH-like"/>
    <property type="match status" value="1"/>
</dbReference>
<dbReference type="PROSITE" id="PS00687">
    <property type="entry name" value="ALDEHYDE_DEHYDR_GLU"/>
    <property type="match status" value="1"/>
</dbReference>
<proteinExistence type="inferred from homology"/>
<comment type="function">
    <text evidence="1">Catalyzes the oxidation 4-aminobutanal (gamma-aminobutyraldehyde) to 4-aminobutanoate (gamma-aminobutyrate or GABA). This is the second step in one of two pathways for putrescine degradation, where putrescine is converted into 4-aminobutanoate via 4-aminobutanal. Also functions as a 5-aminopentanal dehydrogenase in a a L-lysine degradation pathway to succinate that proceeds via cadaverine, glutarate and L-2-hydroxyglutarate.</text>
</comment>
<comment type="catalytic activity">
    <reaction evidence="1">
        <text>4-aminobutanal + NAD(+) + H2O = 4-aminobutanoate + NADH + 2 H(+)</text>
        <dbReference type="Rhea" id="RHEA:19105"/>
        <dbReference type="ChEBI" id="CHEBI:15377"/>
        <dbReference type="ChEBI" id="CHEBI:15378"/>
        <dbReference type="ChEBI" id="CHEBI:57540"/>
        <dbReference type="ChEBI" id="CHEBI:57945"/>
        <dbReference type="ChEBI" id="CHEBI:58264"/>
        <dbReference type="ChEBI" id="CHEBI:59888"/>
        <dbReference type="EC" id="1.2.1.19"/>
    </reaction>
    <physiologicalReaction direction="left-to-right" evidence="1">
        <dbReference type="Rhea" id="RHEA:19106"/>
    </physiologicalReaction>
</comment>
<comment type="catalytic activity">
    <reaction evidence="1">
        <text>5-aminopentanal + NAD(+) + H2O = 5-aminopentanoate + NADH + 2 H(+)</text>
        <dbReference type="Rhea" id="RHEA:61632"/>
        <dbReference type="ChEBI" id="CHEBI:15377"/>
        <dbReference type="ChEBI" id="CHEBI:15378"/>
        <dbReference type="ChEBI" id="CHEBI:57540"/>
        <dbReference type="ChEBI" id="CHEBI:57945"/>
        <dbReference type="ChEBI" id="CHEBI:144896"/>
        <dbReference type="ChEBI" id="CHEBI:356010"/>
    </reaction>
    <physiologicalReaction direction="left-to-right" evidence="1">
        <dbReference type="Rhea" id="RHEA:61633"/>
    </physiologicalReaction>
</comment>
<comment type="pathway">
    <text evidence="1">Amine and polyamine degradation; putrescine degradation; 4-aminobutanoate from 4-aminobutanal: step 1/1.</text>
</comment>
<comment type="pathway">
    <text evidence="1">Amino-acid degradation.</text>
</comment>
<comment type="subunit">
    <text evidence="1">Homotetramer.</text>
</comment>
<comment type="miscellaneous">
    <text evidence="1">4-aminobutanal can spontaneously cyclize to 1-pyrroline, and 5-aminopentanal to 1-piperideine.</text>
</comment>
<comment type="similarity">
    <text evidence="1">Belongs to the aldehyde dehydrogenase family. Gamma-aminobutyraldehyde dehydrogenase subfamily.</text>
</comment>
<keyword id="KW-0520">NAD</keyword>
<keyword id="KW-0560">Oxidoreductase</keyword>
<name>ABDH_SALPC</name>
<organism>
    <name type="scientific">Salmonella paratyphi C (strain RKS4594)</name>
    <dbReference type="NCBI Taxonomy" id="476213"/>
    <lineage>
        <taxon>Bacteria</taxon>
        <taxon>Pseudomonadati</taxon>
        <taxon>Pseudomonadota</taxon>
        <taxon>Gammaproteobacteria</taxon>
        <taxon>Enterobacterales</taxon>
        <taxon>Enterobacteriaceae</taxon>
        <taxon>Salmonella</taxon>
    </lineage>
</organism>
<gene>
    <name evidence="1" type="primary">patD</name>
    <name type="ordered locus">SPC_2138</name>
</gene>